<dbReference type="EMBL" id="AE000782">
    <property type="protein sequence ID" value="AAB91104.1"/>
    <property type="molecule type" value="Genomic_DNA"/>
</dbReference>
<dbReference type="PIR" id="H69266">
    <property type="entry name" value="H69266"/>
</dbReference>
<dbReference type="RefSeq" id="WP_010877648.1">
    <property type="nucleotide sequence ID" value="NC_000917.1"/>
</dbReference>
<dbReference type="STRING" id="224325.AF_0136"/>
<dbReference type="PaxDb" id="224325-AF_0136"/>
<dbReference type="EnsemblBacteria" id="AAB91104">
    <property type="protein sequence ID" value="AAB91104"/>
    <property type="gene ID" value="AF_0136"/>
</dbReference>
<dbReference type="KEGG" id="afu:AF_0136"/>
<dbReference type="eggNOG" id="arCOG06817">
    <property type="taxonomic scope" value="Archaea"/>
</dbReference>
<dbReference type="HOGENOM" id="CLU_120315_0_0_2"/>
<dbReference type="OrthoDB" id="376770at2157"/>
<dbReference type="PhylomeDB" id="O30101"/>
<dbReference type="Proteomes" id="UP000002199">
    <property type="component" value="Chromosome"/>
</dbReference>
<organism>
    <name type="scientific">Archaeoglobus fulgidus (strain ATCC 49558 / DSM 4304 / JCM 9628 / NBRC 100126 / VC-16)</name>
    <dbReference type="NCBI Taxonomy" id="224325"/>
    <lineage>
        <taxon>Archaea</taxon>
        <taxon>Methanobacteriati</taxon>
        <taxon>Methanobacteriota</taxon>
        <taxon>Archaeoglobi</taxon>
        <taxon>Archaeoglobales</taxon>
        <taxon>Archaeoglobaceae</taxon>
        <taxon>Archaeoglobus</taxon>
    </lineage>
</organism>
<name>Y136_ARCFU</name>
<keyword id="KW-1185">Reference proteome</keyword>
<accession>O30101</accession>
<feature type="chain" id="PRO_0000127835" description="Uncharacterized protein AF_0136">
    <location>
        <begin position="1"/>
        <end position="185"/>
    </location>
</feature>
<reference key="1">
    <citation type="journal article" date="1997" name="Nature">
        <title>The complete genome sequence of the hyperthermophilic, sulphate-reducing archaeon Archaeoglobus fulgidus.</title>
        <authorList>
            <person name="Klenk H.-P."/>
            <person name="Clayton R.A."/>
            <person name="Tomb J.-F."/>
            <person name="White O."/>
            <person name="Nelson K.E."/>
            <person name="Ketchum K.A."/>
            <person name="Dodson R.J."/>
            <person name="Gwinn M.L."/>
            <person name="Hickey E.K."/>
            <person name="Peterson J.D."/>
            <person name="Richardson D.L."/>
            <person name="Kerlavage A.R."/>
            <person name="Graham D.E."/>
            <person name="Kyrpides N.C."/>
            <person name="Fleischmann R.D."/>
            <person name="Quackenbush J."/>
            <person name="Lee N.H."/>
            <person name="Sutton G.G."/>
            <person name="Gill S.R."/>
            <person name="Kirkness E.F."/>
            <person name="Dougherty B.A."/>
            <person name="McKenney K."/>
            <person name="Adams M.D."/>
            <person name="Loftus B.J."/>
            <person name="Peterson S.N."/>
            <person name="Reich C.I."/>
            <person name="McNeil L.K."/>
            <person name="Badger J.H."/>
            <person name="Glodek A."/>
            <person name="Zhou L."/>
            <person name="Overbeek R."/>
            <person name="Gocayne J.D."/>
            <person name="Weidman J.F."/>
            <person name="McDonald L.A."/>
            <person name="Utterback T.R."/>
            <person name="Cotton M.D."/>
            <person name="Spriggs T."/>
            <person name="Artiach P."/>
            <person name="Kaine B.P."/>
            <person name="Sykes S.M."/>
            <person name="Sadow P.W."/>
            <person name="D'Andrea K.P."/>
            <person name="Bowman C."/>
            <person name="Fujii C."/>
            <person name="Garland S.A."/>
            <person name="Mason T.M."/>
            <person name="Olsen G.J."/>
            <person name="Fraser C.M."/>
            <person name="Smith H.O."/>
            <person name="Woese C.R."/>
            <person name="Venter J.C."/>
        </authorList>
    </citation>
    <scope>NUCLEOTIDE SEQUENCE [LARGE SCALE GENOMIC DNA]</scope>
    <source>
        <strain>ATCC 49558 / DSM 4304 / JCM 9628 / NBRC 100126 / VC-16</strain>
    </source>
</reference>
<sequence length="185" mass="22028">MPKRRLQTTLSEEAFRIIEKFKPDYGGINEVIEAALKLLNREDRNLSEDDILLIRLIRDLDFTGCGRSQYMHLICGDIEKAVKESMMETAVEWFLKKPFAEIELEEFLETVKRGWKVLNRVDYVEITKGDGWIQIFCEHTMRRREVSEFLAMHILNIYEKYYKGEWDVVKSISTNGFTLKFYRRV</sequence>
<protein>
    <recommendedName>
        <fullName>Uncharacterized protein AF_0136</fullName>
    </recommendedName>
</protein>
<gene>
    <name type="ordered locus">AF_0136</name>
</gene>
<proteinExistence type="predicted"/>